<comment type="function">
    <text evidence="2">Converts stearoyl-ACP to oleoyl-ACP by introduction of a cis double bond between carbons 9 and 10 of the acyl chain.</text>
</comment>
<comment type="catalytic activity">
    <reaction evidence="2">
        <text>octadecanoyl-[ACP] + 2 reduced [2Fe-2S]-[ferredoxin] + O2 + 2 H(+) = (9Z)-octadecenoyl-[ACP] + 2 oxidized [2Fe-2S]-[ferredoxin] + 2 H2O</text>
        <dbReference type="Rhea" id="RHEA:11776"/>
        <dbReference type="Rhea" id="RHEA-COMP:9656"/>
        <dbReference type="Rhea" id="RHEA-COMP:9924"/>
        <dbReference type="Rhea" id="RHEA-COMP:10000"/>
        <dbReference type="Rhea" id="RHEA-COMP:10001"/>
        <dbReference type="ChEBI" id="CHEBI:15377"/>
        <dbReference type="ChEBI" id="CHEBI:15378"/>
        <dbReference type="ChEBI" id="CHEBI:15379"/>
        <dbReference type="ChEBI" id="CHEBI:33737"/>
        <dbReference type="ChEBI" id="CHEBI:33738"/>
        <dbReference type="ChEBI" id="CHEBI:78495"/>
        <dbReference type="ChEBI" id="CHEBI:78783"/>
        <dbReference type="EC" id="1.14.19.2"/>
    </reaction>
</comment>
<comment type="cofactor">
    <cofactor evidence="2">
        <name>Fe(2+)</name>
        <dbReference type="ChEBI" id="CHEBI:29033"/>
    </cofactor>
    <text evidence="2">Binds 2 Fe(2+) ions per subunit.</text>
</comment>
<comment type="pathway">
    <text>Lipid metabolism; fatty acid metabolism.</text>
</comment>
<comment type="subunit">
    <text evidence="2">Homodimer.</text>
</comment>
<comment type="subcellular location">
    <subcellularLocation>
        <location evidence="2">Plastid</location>
        <location evidence="2">Chloroplast</location>
    </subcellularLocation>
    <subcellularLocation>
        <location evidence="2">Plastid</location>
    </subcellularLocation>
    <text>In green tissue, found in chloroplasts. In non-photosynthetic tissue, found in plastids.</text>
</comment>
<comment type="similarity">
    <text evidence="3">Belongs to the fatty acid desaturase type 2 family.</text>
</comment>
<proteinExistence type="evidence at transcript level"/>
<name>STAD_SOLCO</name>
<organism>
    <name type="scientific">Solanum commersonii</name>
    <name type="common">Commerson's wild potato</name>
    <name type="synonym">Commerson's nightshade</name>
    <dbReference type="NCBI Taxonomy" id="4109"/>
    <lineage>
        <taxon>Eukaryota</taxon>
        <taxon>Viridiplantae</taxon>
        <taxon>Streptophyta</taxon>
        <taxon>Embryophyta</taxon>
        <taxon>Tracheophyta</taxon>
        <taxon>Spermatophyta</taxon>
        <taxon>Magnoliopsida</taxon>
        <taxon>eudicotyledons</taxon>
        <taxon>Gunneridae</taxon>
        <taxon>Pentapetalae</taxon>
        <taxon>asterids</taxon>
        <taxon>lamiids</taxon>
        <taxon>Solanales</taxon>
        <taxon>Solanaceae</taxon>
        <taxon>Solanoideae</taxon>
        <taxon>Solaneae</taxon>
        <taxon>Solanum</taxon>
    </lineage>
</organism>
<protein>
    <recommendedName>
        <fullName>Stearoyl-[acyl-carrier-protein] 9-desaturase, chloroplastic</fullName>
        <shortName>Stearoyl-ACP desaturase</shortName>
        <ecNumber evidence="2">1.14.19.2</ecNumber>
    </recommendedName>
    <alternativeName>
        <fullName>Acyl-[acyl-carrier-protein] desaturase</fullName>
    </alternativeName>
</protein>
<feature type="transit peptide" description="Chloroplast" evidence="1">
    <location>
        <begin position="1"/>
        <end position="30"/>
    </location>
</feature>
<feature type="chain" id="PRO_0000007139" description="Stearoyl-[acyl-carrier-protein] 9-desaturase, chloroplastic">
    <location>
        <begin position="31"/>
        <end position="393"/>
    </location>
</feature>
<feature type="binding site" evidence="2">
    <location>
        <position position="135"/>
    </location>
    <ligand>
        <name>Fe cation</name>
        <dbReference type="ChEBI" id="CHEBI:24875"/>
        <label>1</label>
    </ligand>
</feature>
<feature type="binding site" evidence="2">
    <location>
        <position position="173"/>
    </location>
    <ligand>
        <name>Fe cation</name>
        <dbReference type="ChEBI" id="CHEBI:24875"/>
        <label>1</label>
    </ligand>
</feature>
<feature type="binding site" evidence="2">
    <location>
        <position position="173"/>
    </location>
    <ligand>
        <name>Fe cation</name>
        <dbReference type="ChEBI" id="CHEBI:24875"/>
        <label>2</label>
    </ligand>
</feature>
<feature type="binding site" evidence="2">
    <location>
        <position position="176"/>
    </location>
    <ligand>
        <name>Fe cation</name>
        <dbReference type="ChEBI" id="CHEBI:24875"/>
        <label>1</label>
    </ligand>
</feature>
<feature type="binding site" evidence="2">
    <location>
        <position position="226"/>
    </location>
    <ligand>
        <name>Fe cation</name>
        <dbReference type="ChEBI" id="CHEBI:24875"/>
        <label>2</label>
    </ligand>
</feature>
<feature type="binding site" evidence="2">
    <location>
        <position position="259"/>
    </location>
    <ligand>
        <name>Fe cation</name>
        <dbReference type="ChEBI" id="CHEBI:24875"/>
        <label>1</label>
    </ligand>
</feature>
<feature type="binding site" evidence="2">
    <location>
        <position position="259"/>
    </location>
    <ligand>
        <name>Fe cation</name>
        <dbReference type="ChEBI" id="CHEBI:24875"/>
        <label>2</label>
    </ligand>
</feature>
<feature type="binding site" evidence="2">
    <location>
        <position position="262"/>
    </location>
    <ligand>
        <name>Fe cation</name>
        <dbReference type="ChEBI" id="CHEBI:24875"/>
        <label>2</label>
    </ligand>
</feature>
<reference key="1">
    <citation type="submission" date="2006-01" db="EMBL/GenBank/DDBJ databases">
        <authorList>
            <person name="Trucci M."/>
            <person name="Grillo S."/>
            <person name="Costa A."/>
            <person name="Leone A."/>
        </authorList>
    </citation>
    <scope>NUCLEOTIDE SEQUENCE [MRNA]</scope>
    <source>
        <tissue>Leaf</tissue>
    </source>
</reference>
<evidence type="ECO:0000250" key="1">
    <source>
        <dbReference type="UniProtKB" id="P22243"/>
    </source>
</evidence>
<evidence type="ECO:0000250" key="2">
    <source>
        <dbReference type="UniProtKB" id="P22337"/>
    </source>
</evidence>
<evidence type="ECO:0000305" key="3"/>
<sequence>MALNFNSPTFQSIKTTRRPCSPLRSPRVFMASTLRPPSVEDGNVKKPFSPPREVHVQVTHSMPPEKREIFDSLHGWADNNILVHLKPVEKCWQASDFLPDPASEGFEDQVKELRERCKEIPDDYFVVLVGDMITEEALPTYQTMLNTLDGVRDETGASLTPWAIWTRAWTAEENRHGDLLNKYLYLSGRVDMRQIEKTIQYLIGSGMDPRTENNPYLGFIYTSFQERATFISHGNTARHAKEHGDMKLAQVCGIIAADEKRHETAYTKIVEKLFEVDPDGTVLAVADMMRKKISMPAHLMYDGRDDNLFEHFSTVAQRLGVYTAKDYADILEFLVGRWEIEKLTGLSGEGHKARDYVCGLAPRIRKLEERAQARAKQKAPVPFSWVFGKDIKL</sequence>
<dbReference type="EC" id="1.14.19.2" evidence="2"/>
<dbReference type="EMBL" id="X78935">
    <property type="protein sequence ID" value="CAA55535.2"/>
    <property type="molecule type" value="mRNA"/>
</dbReference>
<dbReference type="PIR" id="S44202">
    <property type="entry name" value="S44202"/>
</dbReference>
<dbReference type="SMR" id="Q41319"/>
<dbReference type="UniPathway" id="UPA00199"/>
<dbReference type="GO" id="GO:0009570">
    <property type="term" value="C:chloroplast stroma"/>
    <property type="evidence" value="ECO:0007669"/>
    <property type="project" value="TreeGrafter"/>
</dbReference>
<dbReference type="GO" id="GO:0046872">
    <property type="term" value="F:metal ion binding"/>
    <property type="evidence" value="ECO:0007669"/>
    <property type="project" value="UniProtKB-KW"/>
</dbReference>
<dbReference type="GO" id="GO:0045300">
    <property type="term" value="F:stearoyl-[ACP] desaturase activity"/>
    <property type="evidence" value="ECO:0007669"/>
    <property type="project" value="UniProtKB-EC"/>
</dbReference>
<dbReference type="GO" id="GO:0006633">
    <property type="term" value="P:fatty acid biosynthetic process"/>
    <property type="evidence" value="ECO:0007669"/>
    <property type="project" value="UniProtKB-KW"/>
</dbReference>
<dbReference type="CDD" id="cd01050">
    <property type="entry name" value="Acyl_ACP_Desat"/>
    <property type="match status" value="1"/>
</dbReference>
<dbReference type="FunFam" id="1.10.620.20:FF:000002">
    <property type="entry name" value="Stearoyl-[acyl-carrier-protein] 9-desaturase, chloroplastic"/>
    <property type="match status" value="1"/>
</dbReference>
<dbReference type="Gene3D" id="1.10.620.20">
    <property type="entry name" value="Ribonucleotide Reductase, subunit A"/>
    <property type="match status" value="1"/>
</dbReference>
<dbReference type="InterPro" id="IPR005067">
    <property type="entry name" value="Fatty_acid_desaturase-2"/>
</dbReference>
<dbReference type="InterPro" id="IPR009078">
    <property type="entry name" value="Ferritin-like_SF"/>
</dbReference>
<dbReference type="InterPro" id="IPR012348">
    <property type="entry name" value="RNR-like"/>
</dbReference>
<dbReference type="PANTHER" id="PTHR31155">
    <property type="entry name" value="ACYL- ACYL-CARRIER-PROTEIN DESATURASE-RELATED"/>
    <property type="match status" value="1"/>
</dbReference>
<dbReference type="PANTHER" id="PTHR31155:SF27">
    <property type="entry name" value="STEAROYL-[ACYL-CARRIER-PROTEIN] 9-DESATURASE 5, CHLOROPLASTIC"/>
    <property type="match status" value="1"/>
</dbReference>
<dbReference type="Pfam" id="PF03405">
    <property type="entry name" value="FA_desaturase_2"/>
    <property type="match status" value="1"/>
</dbReference>
<dbReference type="PIRSF" id="PIRSF000346">
    <property type="entry name" value="Dlt9_acylACP_des"/>
    <property type="match status" value="1"/>
</dbReference>
<dbReference type="SUPFAM" id="SSF47240">
    <property type="entry name" value="Ferritin-like"/>
    <property type="match status" value="1"/>
</dbReference>
<accession>Q41319</accession>
<keyword id="KW-0150">Chloroplast</keyword>
<keyword id="KW-0275">Fatty acid biosynthesis</keyword>
<keyword id="KW-0276">Fatty acid metabolism</keyword>
<keyword id="KW-0408">Iron</keyword>
<keyword id="KW-0444">Lipid biosynthesis</keyword>
<keyword id="KW-0443">Lipid metabolism</keyword>
<keyword id="KW-0479">Metal-binding</keyword>
<keyword id="KW-0560">Oxidoreductase</keyword>
<keyword id="KW-0934">Plastid</keyword>
<keyword id="KW-0809">Transit peptide</keyword>